<evidence type="ECO:0000255" key="1">
    <source>
        <dbReference type="HAMAP-Rule" id="MF_00735"/>
    </source>
</evidence>
<feature type="chain" id="PRO_1000132826" description="Ribosomal protein L11 methyltransferase">
    <location>
        <begin position="1"/>
        <end position="293"/>
    </location>
</feature>
<feature type="binding site" evidence="1">
    <location>
        <position position="145"/>
    </location>
    <ligand>
        <name>S-adenosyl-L-methionine</name>
        <dbReference type="ChEBI" id="CHEBI:59789"/>
    </ligand>
</feature>
<feature type="binding site" evidence="1">
    <location>
        <position position="166"/>
    </location>
    <ligand>
        <name>S-adenosyl-L-methionine</name>
        <dbReference type="ChEBI" id="CHEBI:59789"/>
    </ligand>
</feature>
<feature type="binding site" evidence="1">
    <location>
        <position position="188"/>
    </location>
    <ligand>
        <name>S-adenosyl-L-methionine</name>
        <dbReference type="ChEBI" id="CHEBI:59789"/>
    </ligand>
</feature>
<feature type="binding site" evidence="1">
    <location>
        <position position="230"/>
    </location>
    <ligand>
        <name>S-adenosyl-L-methionine</name>
        <dbReference type="ChEBI" id="CHEBI:59789"/>
    </ligand>
</feature>
<reference key="1">
    <citation type="journal article" date="2008" name="PLoS ONE">
        <title>Environmental adaptation: genomic analysis of the piezotolerant and psychrotolerant deep-sea iron reducing bacterium Shewanella piezotolerans WP3.</title>
        <authorList>
            <person name="Wang F."/>
            <person name="Wang J."/>
            <person name="Jian H."/>
            <person name="Zhang B."/>
            <person name="Li S."/>
            <person name="Wang F."/>
            <person name="Zeng X."/>
            <person name="Gao L."/>
            <person name="Bartlett D.H."/>
            <person name="Yu J."/>
            <person name="Hu S."/>
            <person name="Xiao X."/>
        </authorList>
    </citation>
    <scope>NUCLEOTIDE SEQUENCE [LARGE SCALE GENOMIC DNA]</scope>
    <source>
        <strain>WP3 / JCM 13877</strain>
    </source>
</reference>
<name>PRMA_SHEPW</name>
<protein>
    <recommendedName>
        <fullName evidence="1">Ribosomal protein L11 methyltransferase</fullName>
        <shortName evidence="1">L11 Mtase</shortName>
        <ecNumber evidence="1">2.1.1.-</ecNumber>
    </recommendedName>
</protein>
<dbReference type="EC" id="2.1.1.-" evidence="1"/>
<dbReference type="EMBL" id="CP000472">
    <property type="protein sequence ID" value="ACJ27259.1"/>
    <property type="molecule type" value="Genomic_DNA"/>
</dbReference>
<dbReference type="RefSeq" id="WP_020910640.1">
    <property type="nucleotide sequence ID" value="NC_011566.1"/>
</dbReference>
<dbReference type="SMR" id="B8CHY3"/>
<dbReference type="STRING" id="225849.swp_0427"/>
<dbReference type="KEGG" id="swp:swp_0427"/>
<dbReference type="eggNOG" id="COG2264">
    <property type="taxonomic scope" value="Bacteria"/>
</dbReference>
<dbReference type="HOGENOM" id="CLU_049382_4_1_6"/>
<dbReference type="OrthoDB" id="9785995at2"/>
<dbReference type="Proteomes" id="UP000000753">
    <property type="component" value="Chromosome"/>
</dbReference>
<dbReference type="GO" id="GO:0005829">
    <property type="term" value="C:cytosol"/>
    <property type="evidence" value="ECO:0007669"/>
    <property type="project" value="TreeGrafter"/>
</dbReference>
<dbReference type="GO" id="GO:0016279">
    <property type="term" value="F:protein-lysine N-methyltransferase activity"/>
    <property type="evidence" value="ECO:0007669"/>
    <property type="project" value="TreeGrafter"/>
</dbReference>
<dbReference type="GO" id="GO:0032259">
    <property type="term" value="P:methylation"/>
    <property type="evidence" value="ECO:0007669"/>
    <property type="project" value="UniProtKB-KW"/>
</dbReference>
<dbReference type="CDD" id="cd02440">
    <property type="entry name" value="AdoMet_MTases"/>
    <property type="match status" value="1"/>
</dbReference>
<dbReference type="Gene3D" id="3.40.50.150">
    <property type="entry name" value="Vaccinia Virus protein VP39"/>
    <property type="match status" value="1"/>
</dbReference>
<dbReference type="HAMAP" id="MF_00735">
    <property type="entry name" value="Methyltr_PrmA"/>
    <property type="match status" value="1"/>
</dbReference>
<dbReference type="InterPro" id="IPR050078">
    <property type="entry name" value="Ribosomal_L11_MeTrfase_PrmA"/>
</dbReference>
<dbReference type="InterPro" id="IPR004498">
    <property type="entry name" value="Ribosomal_PrmA_MeTrfase"/>
</dbReference>
<dbReference type="InterPro" id="IPR029063">
    <property type="entry name" value="SAM-dependent_MTases_sf"/>
</dbReference>
<dbReference type="NCBIfam" id="TIGR00406">
    <property type="entry name" value="prmA"/>
    <property type="match status" value="1"/>
</dbReference>
<dbReference type="PANTHER" id="PTHR43648">
    <property type="entry name" value="ELECTRON TRANSFER FLAVOPROTEIN BETA SUBUNIT LYSINE METHYLTRANSFERASE"/>
    <property type="match status" value="1"/>
</dbReference>
<dbReference type="PANTHER" id="PTHR43648:SF1">
    <property type="entry name" value="ELECTRON TRANSFER FLAVOPROTEIN BETA SUBUNIT LYSINE METHYLTRANSFERASE"/>
    <property type="match status" value="1"/>
</dbReference>
<dbReference type="Pfam" id="PF06325">
    <property type="entry name" value="PrmA"/>
    <property type="match status" value="1"/>
</dbReference>
<dbReference type="PIRSF" id="PIRSF000401">
    <property type="entry name" value="RPL11_MTase"/>
    <property type="match status" value="1"/>
</dbReference>
<dbReference type="SUPFAM" id="SSF53335">
    <property type="entry name" value="S-adenosyl-L-methionine-dependent methyltransferases"/>
    <property type="match status" value="1"/>
</dbReference>
<accession>B8CHY3</accession>
<comment type="function">
    <text evidence="1">Methylates ribosomal protein L11.</text>
</comment>
<comment type="catalytic activity">
    <reaction evidence="1">
        <text>L-lysyl-[protein] + 3 S-adenosyl-L-methionine = N(6),N(6),N(6)-trimethyl-L-lysyl-[protein] + 3 S-adenosyl-L-homocysteine + 3 H(+)</text>
        <dbReference type="Rhea" id="RHEA:54192"/>
        <dbReference type="Rhea" id="RHEA-COMP:9752"/>
        <dbReference type="Rhea" id="RHEA-COMP:13826"/>
        <dbReference type="ChEBI" id="CHEBI:15378"/>
        <dbReference type="ChEBI" id="CHEBI:29969"/>
        <dbReference type="ChEBI" id="CHEBI:57856"/>
        <dbReference type="ChEBI" id="CHEBI:59789"/>
        <dbReference type="ChEBI" id="CHEBI:61961"/>
    </reaction>
</comment>
<comment type="subcellular location">
    <subcellularLocation>
        <location evidence="1">Cytoplasm</location>
    </subcellularLocation>
</comment>
<comment type="similarity">
    <text evidence="1">Belongs to the methyltransferase superfamily. PrmA family.</text>
</comment>
<gene>
    <name evidence="1" type="primary">prmA</name>
    <name type="ordered locus">swp_0427</name>
</gene>
<proteinExistence type="inferred from homology"/>
<organism>
    <name type="scientific">Shewanella piezotolerans (strain WP3 / JCM 13877)</name>
    <dbReference type="NCBI Taxonomy" id="225849"/>
    <lineage>
        <taxon>Bacteria</taxon>
        <taxon>Pseudomonadati</taxon>
        <taxon>Pseudomonadota</taxon>
        <taxon>Gammaproteobacteria</taxon>
        <taxon>Alteromonadales</taxon>
        <taxon>Shewanellaceae</taxon>
        <taxon>Shewanella</taxon>
    </lineage>
</organism>
<keyword id="KW-0963">Cytoplasm</keyword>
<keyword id="KW-0489">Methyltransferase</keyword>
<keyword id="KW-0949">S-adenosyl-L-methionine</keyword>
<keyword id="KW-0808">Transferase</keyword>
<sequence length="293" mass="32594">MPWIQLRIDTDGPHADALSDQLMEEGSISITFEDGKDTPIYEPTLGETPLWNHTVIIALFEADHDLVPVVERLKLLPYLGENFSHKIEQVEDKDWEREWMDNFHPIKFGDRLWICPSWREIPDPTAVNVILDPGLAFGTGTHPTTALCLEWLDGLDYRNKDVIDFGCGSGILAVAALKLGAEKVTGVDIDYQAIEASKANAERNGVEDQLALYLPEDQPEGLIADILVANILAGPLRELAPLIAEKVKPGGQLALSGLLKEQADEVSAFYSQWFEMDAPAHKDDWSRLTGIRK</sequence>